<organism>
    <name type="scientific">Mycobacterium tuberculosis (strain ATCC 25618 / H37Rv)</name>
    <dbReference type="NCBI Taxonomy" id="83332"/>
    <lineage>
        <taxon>Bacteria</taxon>
        <taxon>Bacillati</taxon>
        <taxon>Actinomycetota</taxon>
        <taxon>Actinomycetes</taxon>
        <taxon>Mycobacteriales</taxon>
        <taxon>Mycobacteriaceae</taxon>
        <taxon>Mycobacterium</taxon>
        <taxon>Mycobacterium tuberculosis complex</taxon>
    </lineage>
</organism>
<name>SECD_MYCTU</name>
<evidence type="ECO:0000255" key="1">
    <source>
        <dbReference type="HAMAP-Rule" id="MF_01463"/>
    </source>
</evidence>
<evidence type="ECO:0000256" key="2">
    <source>
        <dbReference type="SAM" id="MobiDB-lite"/>
    </source>
</evidence>
<keyword id="KW-1003">Cell membrane</keyword>
<keyword id="KW-0472">Membrane</keyword>
<keyword id="KW-0653">Protein transport</keyword>
<keyword id="KW-1185">Reference proteome</keyword>
<keyword id="KW-0811">Translocation</keyword>
<keyword id="KW-0812">Transmembrane</keyword>
<keyword id="KW-1133">Transmembrane helix</keyword>
<keyword id="KW-0813">Transport</keyword>
<dbReference type="EMBL" id="AL123456">
    <property type="protein sequence ID" value="CCP45383.1"/>
    <property type="molecule type" value="Genomic_DNA"/>
</dbReference>
<dbReference type="PIR" id="B70726">
    <property type="entry name" value="B70726"/>
</dbReference>
<dbReference type="RefSeq" id="NP_217103.1">
    <property type="nucleotide sequence ID" value="NC_000962.3"/>
</dbReference>
<dbReference type="RefSeq" id="WP_003413385.1">
    <property type="nucleotide sequence ID" value="NZ_NVQJ01000023.1"/>
</dbReference>
<dbReference type="SMR" id="P9WGP1"/>
<dbReference type="STRING" id="83332.Rv2587c"/>
<dbReference type="PaxDb" id="83332-Rv2587c"/>
<dbReference type="DNASU" id="888192"/>
<dbReference type="GeneID" id="45426589"/>
<dbReference type="GeneID" id="888192"/>
<dbReference type="KEGG" id="mtu:Rv2587c"/>
<dbReference type="KEGG" id="mtv:RVBD_2587c"/>
<dbReference type="TubercuList" id="Rv2587c"/>
<dbReference type="eggNOG" id="COG0342">
    <property type="taxonomic scope" value="Bacteria"/>
</dbReference>
<dbReference type="InParanoid" id="P9WGP1"/>
<dbReference type="OrthoDB" id="5240379at2"/>
<dbReference type="PhylomeDB" id="P9WGP1"/>
<dbReference type="Reactome" id="R-HSA-1222387">
    <property type="pathway name" value="Tolerance of reactive oxygen produced by macrophages"/>
</dbReference>
<dbReference type="Proteomes" id="UP000001584">
    <property type="component" value="Chromosome"/>
</dbReference>
<dbReference type="GO" id="GO:0005829">
    <property type="term" value="C:cytosol"/>
    <property type="evidence" value="ECO:0007005"/>
    <property type="project" value="MTBBASE"/>
</dbReference>
<dbReference type="GO" id="GO:0009274">
    <property type="term" value="C:peptidoglycan-based cell wall"/>
    <property type="evidence" value="ECO:0007005"/>
    <property type="project" value="MTBBASE"/>
</dbReference>
<dbReference type="GO" id="GO:0005886">
    <property type="term" value="C:plasma membrane"/>
    <property type="evidence" value="ECO:0007005"/>
    <property type="project" value="MTBBASE"/>
</dbReference>
<dbReference type="GO" id="GO:0015450">
    <property type="term" value="F:protein-transporting ATPase activity"/>
    <property type="evidence" value="ECO:0007669"/>
    <property type="project" value="InterPro"/>
</dbReference>
<dbReference type="GO" id="GO:0065002">
    <property type="term" value="P:intracellular protein transmembrane transport"/>
    <property type="evidence" value="ECO:0007669"/>
    <property type="project" value="UniProtKB-UniRule"/>
</dbReference>
<dbReference type="GO" id="GO:0006605">
    <property type="term" value="P:protein targeting"/>
    <property type="evidence" value="ECO:0007669"/>
    <property type="project" value="UniProtKB-UniRule"/>
</dbReference>
<dbReference type="GO" id="GO:0015031">
    <property type="term" value="P:protein transport"/>
    <property type="evidence" value="ECO:0000318"/>
    <property type="project" value="GO_Central"/>
</dbReference>
<dbReference type="GO" id="GO:0043952">
    <property type="term" value="P:protein transport by the Sec complex"/>
    <property type="evidence" value="ECO:0007669"/>
    <property type="project" value="UniProtKB-UniRule"/>
</dbReference>
<dbReference type="FunFam" id="1.20.1640.10:FF:000014">
    <property type="entry name" value="Protein translocase subunit SecD"/>
    <property type="match status" value="1"/>
</dbReference>
<dbReference type="FunFam" id="3.30.1360.200:FF:000005">
    <property type="entry name" value="Protein translocase subunit SecD"/>
    <property type="match status" value="1"/>
</dbReference>
<dbReference type="FunFam" id="3.30.70.3220:FF:000002">
    <property type="entry name" value="Protein translocase subunit SecD"/>
    <property type="match status" value="1"/>
</dbReference>
<dbReference type="Gene3D" id="3.30.1360.200">
    <property type="match status" value="1"/>
</dbReference>
<dbReference type="Gene3D" id="3.30.70.3220">
    <property type="match status" value="1"/>
</dbReference>
<dbReference type="Gene3D" id="1.20.1640.10">
    <property type="entry name" value="Multidrug efflux transporter AcrB transmembrane domain"/>
    <property type="match status" value="1"/>
</dbReference>
<dbReference type="HAMAP" id="MF_01463_B">
    <property type="entry name" value="SecD_B"/>
    <property type="match status" value="1"/>
</dbReference>
<dbReference type="InterPro" id="IPR005791">
    <property type="entry name" value="SecD"/>
</dbReference>
<dbReference type="InterPro" id="IPR022813">
    <property type="entry name" value="SecD/SecF_arch_bac"/>
</dbReference>
<dbReference type="InterPro" id="IPR022646">
    <property type="entry name" value="SecD/SecF_CS"/>
</dbReference>
<dbReference type="InterPro" id="IPR048634">
    <property type="entry name" value="SecD_SecF_C"/>
</dbReference>
<dbReference type="InterPro" id="IPR055344">
    <property type="entry name" value="SecD_SecF_C_bact"/>
</dbReference>
<dbReference type="InterPro" id="IPR054384">
    <property type="entry name" value="SecDF_P1_head"/>
</dbReference>
<dbReference type="NCBIfam" id="TIGR00916">
    <property type="entry name" value="2A0604s01"/>
    <property type="match status" value="1"/>
</dbReference>
<dbReference type="NCBIfam" id="TIGR01129">
    <property type="entry name" value="secD"/>
    <property type="match status" value="1"/>
</dbReference>
<dbReference type="PANTHER" id="PTHR30081:SF1">
    <property type="entry name" value="PROTEIN TRANSLOCASE SUBUNIT SECD"/>
    <property type="match status" value="1"/>
</dbReference>
<dbReference type="PANTHER" id="PTHR30081">
    <property type="entry name" value="PROTEIN-EXPORT MEMBRANE PROTEIN SEC"/>
    <property type="match status" value="1"/>
</dbReference>
<dbReference type="Pfam" id="PF07549">
    <property type="entry name" value="Sec_GG"/>
    <property type="match status" value="1"/>
</dbReference>
<dbReference type="Pfam" id="PF02355">
    <property type="entry name" value="SecD_SecF_C"/>
    <property type="match status" value="1"/>
</dbReference>
<dbReference type="Pfam" id="PF22599">
    <property type="entry name" value="SecDF_P1_head"/>
    <property type="match status" value="1"/>
</dbReference>
<dbReference type="SUPFAM" id="SSF82866">
    <property type="entry name" value="Multidrug efflux transporter AcrB transmembrane domain"/>
    <property type="match status" value="1"/>
</dbReference>
<protein>
    <recommendedName>
        <fullName evidence="1">Protein translocase subunit SecD</fullName>
    </recommendedName>
</protein>
<comment type="function">
    <text evidence="1">Part of the Sec protein translocase complex. Interacts with the SecYEG preprotein conducting channel. SecDF uses the proton motive force (PMF) to complete protein translocation after the ATP-dependent function of SecA.</text>
</comment>
<comment type="subunit">
    <text evidence="1">Forms a complex with SecF. Part of the essential Sec protein translocation apparatus which comprises SecA, SecYEG and auxiliary proteins SecDF. Other proteins may also be involved.</text>
</comment>
<comment type="subcellular location">
    <subcellularLocation>
        <location evidence="1">Cell membrane</location>
        <topology evidence="1">Multi-pass membrane protein</topology>
    </subcellularLocation>
</comment>
<comment type="similarity">
    <text evidence="1">Belongs to the SecD/SecF family. SecD subfamily.</text>
</comment>
<reference key="1">
    <citation type="journal article" date="1998" name="Nature">
        <title>Deciphering the biology of Mycobacterium tuberculosis from the complete genome sequence.</title>
        <authorList>
            <person name="Cole S.T."/>
            <person name="Brosch R."/>
            <person name="Parkhill J."/>
            <person name="Garnier T."/>
            <person name="Churcher C.M."/>
            <person name="Harris D.E."/>
            <person name="Gordon S.V."/>
            <person name="Eiglmeier K."/>
            <person name="Gas S."/>
            <person name="Barry C.E. III"/>
            <person name="Tekaia F."/>
            <person name="Badcock K."/>
            <person name="Basham D."/>
            <person name="Brown D."/>
            <person name="Chillingworth T."/>
            <person name="Connor R."/>
            <person name="Davies R.M."/>
            <person name="Devlin K."/>
            <person name="Feltwell T."/>
            <person name="Gentles S."/>
            <person name="Hamlin N."/>
            <person name="Holroyd S."/>
            <person name="Hornsby T."/>
            <person name="Jagels K."/>
            <person name="Krogh A."/>
            <person name="McLean J."/>
            <person name="Moule S."/>
            <person name="Murphy L.D."/>
            <person name="Oliver S."/>
            <person name="Osborne J."/>
            <person name="Quail M.A."/>
            <person name="Rajandream M.A."/>
            <person name="Rogers J."/>
            <person name="Rutter S."/>
            <person name="Seeger K."/>
            <person name="Skelton S."/>
            <person name="Squares S."/>
            <person name="Squares R."/>
            <person name="Sulston J.E."/>
            <person name="Taylor K."/>
            <person name="Whitehead S."/>
            <person name="Barrell B.G."/>
        </authorList>
    </citation>
    <scope>NUCLEOTIDE SEQUENCE [LARGE SCALE GENOMIC DNA]</scope>
    <source>
        <strain>ATCC 25618 / H37Rv</strain>
    </source>
</reference>
<reference key="2">
    <citation type="journal article" date="2011" name="Mol. Cell. Proteomics">
        <title>Proteogenomic analysis of Mycobacterium tuberculosis by high resolution mass spectrometry.</title>
        <authorList>
            <person name="Kelkar D.S."/>
            <person name="Kumar D."/>
            <person name="Kumar P."/>
            <person name="Balakrishnan L."/>
            <person name="Muthusamy B."/>
            <person name="Yadav A.K."/>
            <person name="Shrivastava P."/>
            <person name="Marimuthu A."/>
            <person name="Anand S."/>
            <person name="Sundaram H."/>
            <person name="Kingsbury R."/>
            <person name="Harsha H.C."/>
            <person name="Nair B."/>
            <person name="Prasad T.S."/>
            <person name="Chauhan D.S."/>
            <person name="Katoch K."/>
            <person name="Katoch V.M."/>
            <person name="Kumar P."/>
            <person name="Chaerkady R."/>
            <person name="Ramachandran S."/>
            <person name="Dash D."/>
            <person name="Pandey A."/>
        </authorList>
    </citation>
    <scope>IDENTIFICATION BY MASS SPECTROMETRY [LARGE SCALE ANALYSIS]</scope>
    <source>
        <strain>ATCC 25618 / H37Rv</strain>
    </source>
</reference>
<proteinExistence type="evidence at protein level"/>
<gene>
    <name evidence="1" type="primary">secD</name>
    <name type="ordered locus">Rv2587c</name>
    <name type="ORF">MTCY227.14</name>
</gene>
<accession>P9WGP1</accession>
<accession>L0TCU8</accession>
<accession>Q50634</accession>
<sequence>MASSSAPVHPARYLSVFLVMLIGIYLLVFFTGDKHTAPKLGIDLQGGTRVTLTARTPDGSAPSREALAQAQQIISARVNGLGVSGSEVVVDGDNLVITVPGNDGSEARNLGQTARLYIRPVLNSMPAQPAAEEPQPAPSAEPQPPGQPAAPPPAQSGAPASPQPGAQPRPYPQDPAPSPNPTSPASPPPAPPAEAPATDPRKDLAERIAQEKKLRQSTNQYMQMVALQFQATRCESDDILAGNDDPKLPLVTCSTDHKTAYLLAPSIISGDQIQNATSGMDQRGIGYVVDLQFKGPAANIWADYTAAHIGTQTAFTLDSQVVSAPQIQEAIPGGRTQISGGDPPFTAATARQLANVLKYGSLPLSFEPSEAQTVSATLGLSSLRAGMIAGAIGLLLVLVYSLLYYRVLGLLTALSLVASGSMVFAILVLLGRYINYTLDLAGIAGLIIGIGTTADSFVVFFERIKDEIREGRSFRSAVPRGWARARKTIVSGNAVTFLAAAVLYFLAIGQVKGFAFTLGLTTILDLVVVFLVTWPLVYLASKSSLLAKPAYNGLGAVQQVARERRAMARTGRG</sequence>
<feature type="chain" id="PRO_0000095966" description="Protein translocase subunit SecD">
    <location>
        <begin position="1"/>
        <end position="573"/>
    </location>
</feature>
<feature type="transmembrane region" description="Helical" evidence="1">
    <location>
        <begin position="13"/>
        <end position="33"/>
    </location>
</feature>
<feature type="transmembrane region" description="Helical" evidence="1">
    <location>
        <begin position="385"/>
        <end position="405"/>
    </location>
</feature>
<feature type="transmembrane region" description="Helical" evidence="1">
    <location>
        <begin position="410"/>
        <end position="430"/>
    </location>
</feature>
<feature type="transmembrane region" description="Helical" evidence="1">
    <location>
        <begin position="441"/>
        <end position="461"/>
    </location>
</feature>
<feature type="transmembrane region" description="Helical" evidence="1">
    <location>
        <begin position="489"/>
        <end position="509"/>
    </location>
</feature>
<feature type="transmembrane region" description="Helical" evidence="1">
    <location>
        <begin position="514"/>
        <end position="534"/>
    </location>
</feature>
<feature type="region of interest" description="Disordered" evidence="2">
    <location>
        <begin position="127"/>
        <end position="200"/>
    </location>
</feature>
<feature type="compositionally biased region" description="Pro residues" evidence="2">
    <location>
        <begin position="135"/>
        <end position="154"/>
    </location>
</feature>
<feature type="compositionally biased region" description="Pro residues" evidence="2">
    <location>
        <begin position="161"/>
        <end position="194"/>
    </location>
</feature>